<reference key="1">
    <citation type="journal article" date="2006" name="Proc. Natl. Acad. Sci. U.S.A.">
        <title>Identification of genes subject to positive selection in uropathogenic strains of Escherichia coli: a comparative genomics approach.</title>
        <authorList>
            <person name="Chen S.L."/>
            <person name="Hung C.-S."/>
            <person name="Xu J."/>
            <person name="Reigstad C.S."/>
            <person name="Magrini V."/>
            <person name="Sabo A."/>
            <person name="Blasiar D."/>
            <person name="Bieri T."/>
            <person name="Meyer R.R."/>
            <person name="Ozersky P."/>
            <person name="Armstrong J.R."/>
            <person name="Fulton R.S."/>
            <person name="Latreille J.P."/>
            <person name="Spieth J."/>
            <person name="Hooton T.M."/>
            <person name="Mardis E.R."/>
            <person name="Hultgren S.J."/>
            <person name="Gordon J.I."/>
        </authorList>
    </citation>
    <scope>NUCLEOTIDE SEQUENCE [LARGE SCALE GENOMIC DNA]</scope>
    <source>
        <strain>UTI89 / UPEC</strain>
    </source>
</reference>
<evidence type="ECO:0000255" key="1">
    <source>
        <dbReference type="HAMAP-Rule" id="MF_01031"/>
    </source>
</evidence>
<accession>Q1RGC6</accession>
<comment type="function">
    <text evidence="1">Catalyzes the isomerization between 2-isopropylmalate and 3-isopropylmalate, via the formation of 2-isopropylmaleate.</text>
</comment>
<comment type="catalytic activity">
    <reaction evidence="1">
        <text>(2R,3S)-3-isopropylmalate = (2S)-2-isopropylmalate</text>
        <dbReference type="Rhea" id="RHEA:32287"/>
        <dbReference type="ChEBI" id="CHEBI:1178"/>
        <dbReference type="ChEBI" id="CHEBI:35121"/>
        <dbReference type="EC" id="4.2.1.33"/>
    </reaction>
</comment>
<comment type="pathway">
    <text evidence="1">Amino-acid biosynthesis; L-leucine biosynthesis; L-leucine from 3-methyl-2-oxobutanoate: step 2/4.</text>
</comment>
<comment type="subunit">
    <text evidence="1">Heterodimer of LeuC and LeuD.</text>
</comment>
<comment type="similarity">
    <text evidence="1">Belongs to the LeuD family. LeuD type 1 subfamily.</text>
</comment>
<organism>
    <name type="scientific">Escherichia coli (strain UTI89 / UPEC)</name>
    <dbReference type="NCBI Taxonomy" id="364106"/>
    <lineage>
        <taxon>Bacteria</taxon>
        <taxon>Pseudomonadati</taxon>
        <taxon>Pseudomonadota</taxon>
        <taxon>Gammaproteobacteria</taxon>
        <taxon>Enterobacterales</taxon>
        <taxon>Enterobacteriaceae</taxon>
        <taxon>Escherichia</taxon>
    </lineage>
</organism>
<protein>
    <recommendedName>
        <fullName evidence="1">3-isopropylmalate dehydratase small subunit</fullName>
        <ecNumber evidence="1">4.2.1.33</ecNumber>
    </recommendedName>
    <alternativeName>
        <fullName evidence="1">Alpha-IPM isomerase</fullName>
        <shortName evidence="1">IPMI</shortName>
    </alternativeName>
    <alternativeName>
        <fullName evidence="1">Isopropylmalate isomerase</fullName>
    </alternativeName>
</protein>
<sequence length="201" mass="22604">MAEKFIKHTGLVVPLDAANVDTDAIIPKQFLQKVTRTGFGAHLFNDWRFLDEKGQQPNPDFVLNFPQYQGASILLARENFGCGSSREHAPWALTDYGFKVVIAPSFADIFYGNSFNNQLLPVKLSDAEVDELFALVKANPGIHFDVDLEAQEVKAGEKTYRFTIDAFRRHCMMNGLDSIGLTLQHDDAIASYEEKQPAFMR</sequence>
<feature type="chain" id="PRO_1000063759" description="3-isopropylmalate dehydratase small subunit">
    <location>
        <begin position="1"/>
        <end position="201"/>
    </location>
</feature>
<dbReference type="EC" id="4.2.1.33" evidence="1"/>
<dbReference type="EMBL" id="CP000243">
    <property type="protein sequence ID" value="ABE05588.1"/>
    <property type="molecule type" value="Genomic_DNA"/>
</dbReference>
<dbReference type="RefSeq" id="WP_000818231.1">
    <property type="nucleotide sequence ID" value="NZ_CP064825.1"/>
</dbReference>
<dbReference type="SMR" id="Q1RGC6"/>
<dbReference type="KEGG" id="eci:UTI89_C0078"/>
<dbReference type="HOGENOM" id="CLU_081378_0_3_6"/>
<dbReference type="UniPathway" id="UPA00048">
    <property type="reaction ID" value="UER00071"/>
</dbReference>
<dbReference type="Proteomes" id="UP000001952">
    <property type="component" value="Chromosome"/>
</dbReference>
<dbReference type="GO" id="GO:0009316">
    <property type="term" value="C:3-isopropylmalate dehydratase complex"/>
    <property type="evidence" value="ECO:0007669"/>
    <property type="project" value="InterPro"/>
</dbReference>
<dbReference type="GO" id="GO:0003861">
    <property type="term" value="F:3-isopropylmalate dehydratase activity"/>
    <property type="evidence" value="ECO:0007669"/>
    <property type="project" value="UniProtKB-UniRule"/>
</dbReference>
<dbReference type="GO" id="GO:0009098">
    <property type="term" value="P:L-leucine biosynthetic process"/>
    <property type="evidence" value="ECO:0007669"/>
    <property type="project" value="UniProtKB-UniRule"/>
</dbReference>
<dbReference type="CDD" id="cd01577">
    <property type="entry name" value="IPMI_Swivel"/>
    <property type="match status" value="1"/>
</dbReference>
<dbReference type="FunFam" id="3.20.19.10:FF:000003">
    <property type="entry name" value="3-isopropylmalate dehydratase small subunit"/>
    <property type="match status" value="1"/>
</dbReference>
<dbReference type="Gene3D" id="3.20.19.10">
    <property type="entry name" value="Aconitase, domain 4"/>
    <property type="match status" value="1"/>
</dbReference>
<dbReference type="HAMAP" id="MF_01031">
    <property type="entry name" value="LeuD_type1"/>
    <property type="match status" value="1"/>
</dbReference>
<dbReference type="InterPro" id="IPR004431">
    <property type="entry name" value="3-IsopropMal_deHydase_ssu"/>
</dbReference>
<dbReference type="InterPro" id="IPR015928">
    <property type="entry name" value="Aconitase/3IPM_dehydase_swvl"/>
</dbReference>
<dbReference type="InterPro" id="IPR000573">
    <property type="entry name" value="AconitaseA/IPMdHydase_ssu_swvl"/>
</dbReference>
<dbReference type="InterPro" id="IPR033940">
    <property type="entry name" value="IPMI_Swivel"/>
</dbReference>
<dbReference type="InterPro" id="IPR050075">
    <property type="entry name" value="LeuD"/>
</dbReference>
<dbReference type="NCBIfam" id="TIGR00171">
    <property type="entry name" value="leuD"/>
    <property type="match status" value="1"/>
</dbReference>
<dbReference type="NCBIfam" id="NF002458">
    <property type="entry name" value="PRK01641.1"/>
    <property type="match status" value="1"/>
</dbReference>
<dbReference type="PANTHER" id="PTHR43345:SF5">
    <property type="entry name" value="3-ISOPROPYLMALATE DEHYDRATASE SMALL SUBUNIT"/>
    <property type="match status" value="1"/>
</dbReference>
<dbReference type="PANTHER" id="PTHR43345">
    <property type="entry name" value="3-ISOPROPYLMALATE DEHYDRATASE SMALL SUBUNIT 2-RELATED-RELATED"/>
    <property type="match status" value="1"/>
</dbReference>
<dbReference type="Pfam" id="PF00694">
    <property type="entry name" value="Aconitase_C"/>
    <property type="match status" value="1"/>
</dbReference>
<dbReference type="SUPFAM" id="SSF52016">
    <property type="entry name" value="LeuD/IlvD-like"/>
    <property type="match status" value="1"/>
</dbReference>
<name>LEUD_ECOUT</name>
<keyword id="KW-0028">Amino-acid biosynthesis</keyword>
<keyword id="KW-0100">Branched-chain amino acid biosynthesis</keyword>
<keyword id="KW-0432">Leucine biosynthesis</keyword>
<keyword id="KW-0456">Lyase</keyword>
<proteinExistence type="inferred from homology"/>
<gene>
    <name evidence="1" type="primary">leuD</name>
    <name type="ordered locus">UTI89_C0078</name>
</gene>